<keyword id="KW-0028">Amino-acid biosynthesis</keyword>
<keyword id="KW-0963">Cytoplasm</keyword>
<keyword id="KW-0368">Histidine biosynthesis</keyword>
<keyword id="KW-0378">Hydrolase</keyword>
<keyword id="KW-0456">Lyase</keyword>
<keyword id="KW-0460">Magnesium</keyword>
<keyword id="KW-0479">Metal-binding</keyword>
<keyword id="KW-0511">Multifunctional enzyme</keyword>
<keyword id="KW-0862">Zinc</keyword>
<feature type="chain" id="PRO_1000063446" description="Histidine biosynthesis bifunctional protein HisB">
    <location>
        <begin position="1"/>
        <end position="362"/>
    </location>
</feature>
<feature type="region of interest" description="Histidinol-phosphatase" evidence="1">
    <location>
        <begin position="1"/>
        <end position="173"/>
    </location>
</feature>
<feature type="region of interest" description="Imidazoleglycerol-phosphate dehydratase" evidence="1">
    <location>
        <begin position="174"/>
        <end position="362"/>
    </location>
</feature>
<feature type="active site" description="Nucleophile" evidence="1">
    <location>
        <position position="8"/>
    </location>
</feature>
<feature type="active site" description="Proton donor" evidence="1">
    <location>
        <position position="10"/>
    </location>
</feature>
<feature type="binding site" evidence="1">
    <location>
        <position position="8"/>
    </location>
    <ligand>
        <name>Mg(2+)</name>
        <dbReference type="ChEBI" id="CHEBI:18420"/>
    </ligand>
</feature>
<feature type="binding site" evidence="1">
    <location>
        <position position="10"/>
    </location>
    <ligand>
        <name>Mg(2+)</name>
        <dbReference type="ChEBI" id="CHEBI:18420"/>
    </ligand>
</feature>
<feature type="binding site" evidence="1">
    <location>
        <position position="91"/>
    </location>
    <ligand>
        <name>Zn(2+)</name>
        <dbReference type="ChEBI" id="CHEBI:29105"/>
    </ligand>
</feature>
<feature type="binding site" evidence="1">
    <location>
        <position position="93"/>
    </location>
    <ligand>
        <name>Zn(2+)</name>
        <dbReference type="ChEBI" id="CHEBI:29105"/>
    </ligand>
</feature>
<feature type="binding site" evidence="1">
    <location>
        <position position="99"/>
    </location>
    <ligand>
        <name>Zn(2+)</name>
        <dbReference type="ChEBI" id="CHEBI:29105"/>
    </ligand>
</feature>
<feature type="binding site" evidence="1">
    <location>
        <position position="101"/>
    </location>
    <ligand>
        <name>Zn(2+)</name>
        <dbReference type="ChEBI" id="CHEBI:29105"/>
    </ligand>
</feature>
<feature type="binding site" evidence="1">
    <location>
        <position position="128"/>
    </location>
    <ligand>
        <name>Mg(2+)</name>
        <dbReference type="ChEBI" id="CHEBI:18420"/>
    </ligand>
</feature>
<evidence type="ECO:0000255" key="1">
    <source>
        <dbReference type="HAMAP-Rule" id="MF_01022"/>
    </source>
</evidence>
<protein>
    <recommendedName>
        <fullName evidence="1">Histidine biosynthesis bifunctional protein HisB</fullName>
    </recommendedName>
    <domain>
        <recommendedName>
            <fullName evidence="1">Histidinol-phosphatase</fullName>
            <ecNumber evidence="1">3.1.3.15</ecNumber>
        </recommendedName>
    </domain>
    <domain>
        <recommendedName>
            <fullName evidence="1">Imidazoleglycerol-phosphate dehydratase</fullName>
            <shortName evidence="1">IGPD</shortName>
            <ecNumber evidence="1">4.2.1.19</ecNumber>
        </recommendedName>
    </domain>
</protein>
<gene>
    <name evidence="1" type="primary">hisB</name>
    <name type="ordered locus">CGSHiEE_00635</name>
</gene>
<dbReference type="EC" id="3.1.3.15" evidence="1"/>
<dbReference type="EC" id="4.2.1.19" evidence="1"/>
<dbReference type="EMBL" id="CP000671">
    <property type="protein sequence ID" value="ABQ97619.1"/>
    <property type="molecule type" value="Genomic_DNA"/>
</dbReference>
<dbReference type="SMR" id="A5UA18"/>
<dbReference type="KEGG" id="hip:CGSHiEE_00635"/>
<dbReference type="HOGENOM" id="CLU_044308_0_0_6"/>
<dbReference type="UniPathway" id="UPA00031">
    <property type="reaction ID" value="UER00011"/>
</dbReference>
<dbReference type="UniPathway" id="UPA00031">
    <property type="reaction ID" value="UER00013"/>
</dbReference>
<dbReference type="GO" id="GO:0005737">
    <property type="term" value="C:cytoplasm"/>
    <property type="evidence" value="ECO:0007669"/>
    <property type="project" value="UniProtKB-SubCell"/>
</dbReference>
<dbReference type="GO" id="GO:0004401">
    <property type="term" value="F:histidinol-phosphatase activity"/>
    <property type="evidence" value="ECO:0007669"/>
    <property type="project" value="UniProtKB-UniRule"/>
</dbReference>
<dbReference type="GO" id="GO:0004424">
    <property type="term" value="F:imidazoleglycerol-phosphate dehydratase activity"/>
    <property type="evidence" value="ECO:0007669"/>
    <property type="project" value="UniProtKB-UniRule"/>
</dbReference>
<dbReference type="GO" id="GO:0046872">
    <property type="term" value="F:metal ion binding"/>
    <property type="evidence" value="ECO:0007669"/>
    <property type="project" value="UniProtKB-KW"/>
</dbReference>
<dbReference type="GO" id="GO:0000105">
    <property type="term" value="P:L-histidine biosynthetic process"/>
    <property type="evidence" value="ECO:0007669"/>
    <property type="project" value="UniProtKB-UniRule"/>
</dbReference>
<dbReference type="CDD" id="cd07503">
    <property type="entry name" value="HAD_HisB-N"/>
    <property type="match status" value="1"/>
</dbReference>
<dbReference type="CDD" id="cd07914">
    <property type="entry name" value="IGPD"/>
    <property type="match status" value="1"/>
</dbReference>
<dbReference type="FunFam" id="3.40.50.1000:FF:000061">
    <property type="entry name" value="Histidine biosynthesis bifunctional protein HisB"/>
    <property type="match status" value="1"/>
</dbReference>
<dbReference type="FunFam" id="3.30.230.40:FF:000001">
    <property type="entry name" value="Imidazoleglycerol-phosphate dehydratase HisB"/>
    <property type="match status" value="1"/>
</dbReference>
<dbReference type="FunFam" id="3.30.230.40:FF:000003">
    <property type="entry name" value="Imidazoleglycerol-phosphate dehydratase HisB"/>
    <property type="match status" value="1"/>
</dbReference>
<dbReference type="Gene3D" id="3.40.50.1000">
    <property type="entry name" value="HAD superfamily/HAD-like"/>
    <property type="match status" value="1"/>
</dbReference>
<dbReference type="Gene3D" id="3.30.230.40">
    <property type="entry name" value="Imidazole glycerol phosphate dehydratase, domain 1"/>
    <property type="match status" value="2"/>
</dbReference>
<dbReference type="HAMAP" id="MF_01022">
    <property type="entry name" value="Bifunc_HisB"/>
    <property type="match status" value="1"/>
</dbReference>
<dbReference type="HAMAP" id="MF_00076">
    <property type="entry name" value="HisB"/>
    <property type="match status" value="1"/>
</dbReference>
<dbReference type="InterPro" id="IPR036412">
    <property type="entry name" value="HAD-like_sf"/>
</dbReference>
<dbReference type="InterPro" id="IPR006549">
    <property type="entry name" value="HAD-SF_hydro_IIIA"/>
</dbReference>
<dbReference type="InterPro" id="IPR023214">
    <property type="entry name" value="HAD_sf"/>
</dbReference>
<dbReference type="InterPro" id="IPR020566">
    <property type="entry name" value="His_synth_bifunc_HisB"/>
</dbReference>
<dbReference type="InterPro" id="IPR005954">
    <property type="entry name" value="HisB_N"/>
</dbReference>
<dbReference type="InterPro" id="IPR006543">
    <property type="entry name" value="Histidinol-phos"/>
</dbReference>
<dbReference type="InterPro" id="IPR038494">
    <property type="entry name" value="IGPD_sf"/>
</dbReference>
<dbReference type="InterPro" id="IPR000807">
    <property type="entry name" value="ImidazoleglycerolP_deHydtase"/>
</dbReference>
<dbReference type="InterPro" id="IPR020565">
    <property type="entry name" value="ImidazoleglycerP_deHydtase_CS"/>
</dbReference>
<dbReference type="InterPro" id="IPR020568">
    <property type="entry name" value="Ribosomal_Su5_D2-typ_SF"/>
</dbReference>
<dbReference type="NCBIfam" id="TIGR01662">
    <property type="entry name" value="HAD-SF-IIIA"/>
    <property type="match status" value="1"/>
</dbReference>
<dbReference type="NCBIfam" id="TIGR01261">
    <property type="entry name" value="hisB_Nterm"/>
    <property type="match status" value="1"/>
</dbReference>
<dbReference type="NCBIfam" id="TIGR01656">
    <property type="entry name" value="Histidinol-ppas"/>
    <property type="match status" value="1"/>
</dbReference>
<dbReference type="NCBIfam" id="NF002111">
    <property type="entry name" value="PRK00951.2-1"/>
    <property type="match status" value="1"/>
</dbReference>
<dbReference type="NCBIfam" id="NF002114">
    <property type="entry name" value="PRK00951.2-4"/>
    <property type="match status" value="1"/>
</dbReference>
<dbReference type="NCBIfam" id="NF003937">
    <property type="entry name" value="PRK05446.1"/>
    <property type="match status" value="1"/>
</dbReference>
<dbReference type="PANTHER" id="PTHR23133:SF2">
    <property type="entry name" value="IMIDAZOLEGLYCEROL-PHOSPHATE DEHYDRATASE"/>
    <property type="match status" value="1"/>
</dbReference>
<dbReference type="PANTHER" id="PTHR23133">
    <property type="entry name" value="IMIDAZOLEGLYCEROL-PHOSPHATE DEHYDRATASE HIS7"/>
    <property type="match status" value="1"/>
</dbReference>
<dbReference type="Pfam" id="PF13242">
    <property type="entry name" value="Hydrolase_like"/>
    <property type="match status" value="1"/>
</dbReference>
<dbReference type="Pfam" id="PF00475">
    <property type="entry name" value="IGPD"/>
    <property type="match status" value="1"/>
</dbReference>
<dbReference type="SUPFAM" id="SSF56784">
    <property type="entry name" value="HAD-like"/>
    <property type="match status" value="1"/>
</dbReference>
<dbReference type="SUPFAM" id="SSF54211">
    <property type="entry name" value="Ribosomal protein S5 domain 2-like"/>
    <property type="match status" value="2"/>
</dbReference>
<dbReference type="PROSITE" id="PS00954">
    <property type="entry name" value="IGP_DEHYDRATASE_1"/>
    <property type="match status" value="1"/>
</dbReference>
<dbReference type="PROSITE" id="PS00955">
    <property type="entry name" value="IGP_DEHYDRATASE_2"/>
    <property type="match status" value="1"/>
</dbReference>
<comment type="catalytic activity">
    <reaction evidence="1">
        <text>D-erythro-1-(imidazol-4-yl)glycerol 3-phosphate = 3-(imidazol-4-yl)-2-oxopropyl phosphate + H2O</text>
        <dbReference type="Rhea" id="RHEA:11040"/>
        <dbReference type="ChEBI" id="CHEBI:15377"/>
        <dbReference type="ChEBI" id="CHEBI:57766"/>
        <dbReference type="ChEBI" id="CHEBI:58278"/>
        <dbReference type="EC" id="4.2.1.19"/>
    </reaction>
</comment>
<comment type="catalytic activity">
    <reaction evidence="1">
        <text>L-histidinol phosphate + H2O = L-histidinol + phosphate</text>
        <dbReference type="Rhea" id="RHEA:14465"/>
        <dbReference type="ChEBI" id="CHEBI:15377"/>
        <dbReference type="ChEBI" id="CHEBI:43474"/>
        <dbReference type="ChEBI" id="CHEBI:57699"/>
        <dbReference type="ChEBI" id="CHEBI:57980"/>
        <dbReference type="EC" id="3.1.3.15"/>
    </reaction>
</comment>
<comment type="cofactor">
    <cofactor evidence="1">
        <name>Mg(2+)</name>
        <dbReference type="ChEBI" id="CHEBI:18420"/>
    </cofactor>
</comment>
<comment type="cofactor">
    <cofactor evidence="1">
        <name>Zn(2+)</name>
        <dbReference type="ChEBI" id="CHEBI:29105"/>
    </cofactor>
</comment>
<comment type="pathway">
    <text evidence="1">Amino-acid biosynthesis; L-histidine biosynthesis; L-histidine from 5-phospho-alpha-D-ribose 1-diphosphate: step 6/9.</text>
</comment>
<comment type="pathway">
    <text evidence="1">Amino-acid biosynthesis; L-histidine biosynthesis; L-histidine from 5-phospho-alpha-D-ribose 1-diphosphate: step 8/9.</text>
</comment>
<comment type="subcellular location">
    <subcellularLocation>
        <location evidence="1">Cytoplasm</location>
    </subcellularLocation>
</comment>
<comment type="similarity">
    <text evidence="1">In the N-terminal section; belongs to the histidinol-phosphatase family.</text>
</comment>
<comment type="similarity">
    <text evidence="1">In the C-terminal section; belongs to the imidazoleglycerol-phosphate dehydratase family.</text>
</comment>
<name>HIS7_HAEIE</name>
<organism>
    <name type="scientific">Haemophilus influenzae (strain PittEE)</name>
    <dbReference type="NCBI Taxonomy" id="374930"/>
    <lineage>
        <taxon>Bacteria</taxon>
        <taxon>Pseudomonadati</taxon>
        <taxon>Pseudomonadota</taxon>
        <taxon>Gammaproteobacteria</taxon>
        <taxon>Pasteurellales</taxon>
        <taxon>Pasteurellaceae</taxon>
        <taxon>Haemophilus</taxon>
    </lineage>
</organism>
<proteinExistence type="inferred from homology"/>
<reference key="1">
    <citation type="journal article" date="2007" name="Genome Biol.">
        <title>Characterization and modeling of the Haemophilus influenzae core and supragenomes based on the complete genomic sequences of Rd and 12 clinical nontypeable strains.</title>
        <authorList>
            <person name="Hogg J.S."/>
            <person name="Hu F.Z."/>
            <person name="Janto B."/>
            <person name="Boissy R."/>
            <person name="Hayes J."/>
            <person name="Keefe R."/>
            <person name="Post J.C."/>
            <person name="Ehrlich G.D."/>
        </authorList>
    </citation>
    <scope>NUCLEOTIDE SEQUENCE [LARGE SCALE GENOMIC DNA]</scope>
    <source>
        <strain>PittEE</strain>
    </source>
</reference>
<accession>A5UA18</accession>
<sequence>MQPTLFIDRDGTLIDEPKTDFQIDSLEKLKLEPKVIPALLRLKAKYRFVIVSNQDGLGTDAFPQTNFDKPHNVMMALFESQGITFDEVLICPHKPEENCLCRKPKIKLLDHYIRKNLFDIDRSFVIGDRETDMQLAENLGIRAIQYDPQKMNWDLIAEKLLGETVTNCGKRPPRFAEVIRQTKETDIKVQVWLDEAGVNEIKTGVGFFDHMLDQIATHGGFRMNVQCKGDLWIDEHHTVEDTALALGQALKQAIGDKRGIARFGFVLPMDECKAECALDLSGRPWIKFNACFKRDKVGDFSTELTEHFFQSLAFSMLATLHLNVTGNNDHHKIESLFKAFGRTLRQAIRIEGNEMPSSKGVL</sequence>